<name>NAP1_SOLLC</name>
<feature type="chain" id="PRO_0000445683" description="NAC domain-containing protein 1">
    <location>
        <begin position="1"/>
        <end position="282"/>
    </location>
</feature>
<feature type="domain" description="NAC" evidence="2">
    <location>
        <begin position="9"/>
        <end position="161"/>
    </location>
</feature>
<feature type="DNA-binding region" evidence="2">
    <location>
        <begin position="106"/>
        <end position="167"/>
    </location>
</feature>
<feature type="coiled-coil region" evidence="1">
    <location>
        <begin position="161"/>
        <end position="188"/>
    </location>
</feature>
<gene>
    <name evidence="4" type="primary">NAP1</name>
    <name evidence="5" type="ordered locus">Solyc05g007770.2.1</name>
</gene>
<comment type="function">
    <text evidence="3">Transcription factor that binds DNA motifs 5'-CGT[AG](5N)NACG[ACT][AC][AT][ACG][ACT]-3' and 5'-CACG[ACT][AC][AT][AGT][CT]-3' in target genes promoters. Promotes leaf senescence and reduces fruit yield and sugar content, probably by establishing abscisic acid (ABA) homeostasis.</text>
</comment>
<comment type="subcellular location">
    <subcellularLocation>
        <location evidence="2">Nucleus</location>
    </subcellularLocation>
</comment>
<comment type="tissue specificity">
    <text evidence="3">Expressed in roots, stem, flowers, and leaves.</text>
</comment>
<comment type="induction">
    <text evidence="3">Accumulates during age-dependent and dark-induced leaf senescence.</text>
</comment>
<comment type="domain">
    <text evidence="2">The NAC domain includes a DNA binding domain and a dimerization domain.</text>
</comment>
<comment type="disruption phenotype">
    <text evidence="3">In plants lacking both NAP1 and NAP2, delayed leaf senescence but enhanced fruit yield and sugar content, likely due to prolonged leaf photosynthesis in aging plants.</text>
</comment>
<organism>
    <name type="scientific">Solanum lycopersicum</name>
    <name type="common">Tomato</name>
    <name type="synonym">Lycopersicon esculentum</name>
    <dbReference type="NCBI Taxonomy" id="4081"/>
    <lineage>
        <taxon>Eukaryota</taxon>
        <taxon>Viridiplantae</taxon>
        <taxon>Streptophyta</taxon>
        <taxon>Embryophyta</taxon>
        <taxon>Tracheophyta</taxon>
        <taxon>Spermatophyta</taxon>
        <taxon>Magnoliopsida</taxon>
        <taxon>eudicotyledons</taxon>
        <taxon>Gunneridae</taxon>
        <taxon>Pentapetalae</taxon>
        <taxon>asterids</taxon>
        <taxon>lamiids</taxon>
        <taxon>Solanales</taxon>
        <taxon>Solanaceae</taxon>
        <taxon>Solanoideae</taxon>
        <taxon>Solaneae</taxon>
        <taxon>Solanum</taxon>
        <taxon>Solanum subgen. Lycopersicon</taxon>
    </lineage>
</organism>
<evidence type="ECO:0000255" key="1"/>
<evidence type="ECO:0000255" key="2">
    <source>
        <dbReference type="PROSITE-ProRule" id="PRU00353"/>
    </source>
</evidence>
<evidence type="ECO:0000269" key="3">
    <source>
    </source>
</evidence>
<evidence type="ECO:0000303" key="4">
    <source>
    </source>
</evidence>
<evidence type="ECO:0000305" key="5"/>
<keyword id="KW-0175">Coiled coil</keyword>
<keyword id="KW-0238">DNA-binding</keyword>
<keyword id="KW-0539">Nucleus</keyword>
<keyword id="KW-1185">Reference proteome</keyword>
<keyword id="KW-0804">Transcription</keyword>
<keyword id="KW-0805">Transcription regulation</keyword>
<accession>K4BWV2</accession>
<sequence>MVGKISSDLPPGFRFHPTDEELIMYYLRYQATSRPCPVSIIPEIDVYKFDPWVLPEKAEFGDNEWYFFTPRDRKYPNGVRPNRAAVSGYWKATGTDKAIYSANKYVGIKKALVFYKGKPPKGVKTDWIMHEYRLSDSKSQTSKQSGSMRLDDWVLCRIYKKKNLGRTIEMMKVEEEELEAQNVSTTNNEIEVVGGPQTMKLPRICSLSHLLELDYFGSIPQLLSDNLLYDDQGYTMNNVNNTSNVDQVSSQQQNTNNITSNNCNIFFNYQQPLFVNPTFQSQ</sequence>
<protein>
    <recommendedName>
        <fullName evidence="4">NAC domain-containing protein 1</fullName>
        <shortName evidence="4">SlNAP1</shortName>
    </recommendedName>
</protein>
<dbReference type="EMBL" id="CM001068">
    <property type="status" value="NOT_ANNOTATED_CDS"/>
    <property type="molecule type" value="Genomic_DNA"/>
</dbReference>
<dbReference type="RefSeq" id="NP_001316452.1">
    <property type="nucleotide sequence ID" value="NM_001329523.1"/>
</dbReference>
<dbReference type="SMR" id="K4BWV2"/>
<dbReference type="FunCoup" id="K4BWV2">
    <property type="interactions" value="23"/>
</dbReference>
<dbReference type="STRING" id="4081.K4BWV2"/>
<dbReference type="PaxDb" id="4081-Solyc05g007770.2.1"/>
<dbReference type="EnsemblPlants" id="Solyc05g007770.3.1">
    <property type="protein sequence ID" value="Solyc05g007770.3.1"/>
    <property type="gene ID" value="Solyc05g007770.3"/>
</dbReference>
<dbReference type="GeneID" id="101244582"/>
<dbReference type="Gramene" id="Solyc05g007770.3.1">
    <property type="protein sequence ID" value="Solyc05g007770.3.1"/>
    <property type="gene ID" value="Solyc05g007770.3"/>
</dbReference>
<dbReference type="KEGG" id="sly:101244582"/>
<dbReference type="eggNOG" id="ENOG502QSIY">
    <property type="taxonomic scope" value="Eukaryota"/>
</dbReference>
<dbReference type="HOGENOM" id="CLU_035664_8_2_1"/>
<dbReference type="InParanoid" id="K4BWV2"/>
<dbReference type="OMA" id="YFPNTID"/>
<dbReference type="OrthoDB" id="1921961at2759"/>
<dbReference type="PhylomeDB" id="K4BWV2"/>
<dbReference type="Proteomes" id="UP000004994">
    <property type="component" value="Chromosome 5"/>
</dbReference>
<dbReference type="GO" id="GO:0005634">
    <property type="term" value="C:nucleus"/>
    <property type="evidence" value="ECO:0007669"/>
    <property type="project" value="UniProtKB-SubCell"/>
</dbReference>
<dbReference type="GO" id="GO:0043565">
    <property type="term" value="F:sequence-specific DNA binding"/>
    <property type="evidence" value="ECO:0000314"/>
    <property type="project" value="UniProtKB"/>
</dbReference>
<dbReference type="GO" id="GO:0010150">
    <property type="term" value="P:leaf senescence"/>
    <property type="evidence" value="ECO:0000315"/>
    <property type="project" value="UniProtKB"/>
</dbReference>
<dbReference type="GO" id="GO:0006355">
    <property type="term" value="P:regulation of DNA-templated transcription"/>
    <property type="evidence" value="ECO:0000314"/>
    <property type="project" value="UniProtKB"/>
</dbReference>
<dbReference type="GO" id="GO:0031155">
    <property type="term" value="P:regulation of reproductive fruiting body development"/>
    <property type="evidence" value="ECO:0000315"/>
    <property type="project" value="UniProtKB"/>
</dbReference>
<dbReference type="FunFam" id="2.170.150.80:FF:000004">
    <property type="entry name" value="NAC transcription factor"/>
    <property type="match status" value="1"/>
</dbReference>
<dbReference type="Gene3D" id="2.170.150.80">
    <property type="entry name" value="NAC domain"/>
    <property type="match status" value="1"/>
</dbReference>
<dbReference type="InterPro" id="IPR003441">
    <property type="entry name" value="NAC-dom"/>
</dbReference>
<dbReference type="InterPro" id="IPR036093">
    <property type="entry name" value="NAC_dom_sf"/>
</dbReference>
<dbReference type="PANTHER" id="PTHR31719:SF127">
    <property type="entry name" value="NAC TRANSCRIPTION FACTOR 29"/>
    <property type="match status" value="1"/>
</dbReference>
<dbReference type="PANTHER" id="PTHR31719">
    <property type="entry name" value="NAC TRANSCRIPTION FACTOR 56"/>
    <property type="match status" value="1"/>
</dbReference>
<dbReference type="Pfam" id="PF02365">
    <property type="entry name" value="NAM"/>
    <property type="match status" value="1"/>
</dbReference>
<dbReference type="SUPFAM" id="SSF101941">
    <property type="entry name" value="NAC domain"/>
    <property type="match status" value="1"/>
</dbReference>
<dbReference type="PROSITE" id="PS51005">
    <property type="entry name" value="NAC"/>
    <property type="match status" value="1"/>
</dbReference>
<proteinExistence type="evidence at transcript level"/>
<reference key="1">
    <citation type="journal article" date="2012" name="Nature">
        <title>The tomato genome sequence provides insights into fleshy fruit evolution.</title>
        <authorList>
            <consortium name="Tomato Genome Consortium"/>
        </authorList>
    </citation>
    <scope>NUCLEOTIDE SEQUENCE [LARGE SCALE GENOMIC DNA]</scope>
    <source>
        <strain>cv. Heinz 1706</strain>
    </source>
</reference>
<reference key="2">
    <citation type="journal article" date="2018" name="Plant Physiol.">
        <title>The NAC transcription factor SlNAP2 regulates leaf senescence and fruit yield in tomato.</title>
        <authorList>
            <person name="Ma X."/>
            <person name="Zhang Y."/>
            <person name="Tureckova V."/>
            <person name="Xue G.-P."/>
            <person name="Fernie A.R."/>
            <person name="Mueller-Roeber B."/>
            <person name="Balazadeh S."/>
        </authorList>
    </citation>
    <scope>FUNCTION</scope>
    <scope>DISRUPTION PHENOTYPE</scope>
    <scope>INDUCTION BY LEAF SENESCENCE</scope>
    <scope>TISSUE SPECIFICITY</scope>
    <scope>GENE FAMILY</scope>
    <scope>NOMENCLATURE</scope>
    <source>
        <strain>cv. Moneymaker</strain>
    </source>
</reference>